<sequence length="393" mass="42984">MSEKEGKVIPETNGMKRPRFDPVKLGLPEEFTLTDYTRLKGCSCKVPQPELLALLQSVSTTPGRRDVGMDCSIVKLQHKDETGKPLYMVSTTDFFFPSVEDPYLQGQIGAANVLSDLYSTGIDRCDTVLMLLAASTDMDKTEREVCTQEMMKGFVDHVRLAGSDVTGGQTVMNPWPLIGGIATSVVAESQMIRPTGLQPGDILVLTKPLGCQIAVNLKQWLRRPSPIFEEQIQGKMDSEEIEELYNAAADGMKRLNRMAAALMHSHGAHGATDVTGFGILGHAKNLGSAQKADVCLVLDSLPMYRGAVKASKLMGDKYRLFEGYAAETSGGLLVAFGTREEAEGYIRELYETDGEPAWVVGRVVRREGSAPYALLQKDYKIIEVGAKVNDKII</sequence>
<keyword id="KW-0067">ATP-binding</keyword>
<keyword id="KW-0418">Kinase</keyword>
<keyword id="KW-0460">Magnesium</keyword>
<keyword id="KW-0479">Metal-binding</keyword>
<keyword id="KW-0547">Nucleotide-binding</keyword>
<keyword id="KW-1185">Reference proteome</keyword>
<keyword id="KW-0711">Selenium</keyword>
<keyword id="KW-0808">Transferase</keyword>
<dbReference type="EC" id="2.7.9.3" evidence="4"/>
<dbReference type="EMBL" id="CM000208">
    <property type="protein sequence ID" value="EAN78336.1"/>
    <property type="molecule type" value="Genomic_DNA"/>
</dbReference>
<dbReference type="RefSeq" id="XP_823164.1">
    <property type="nucleotide sequence ID" value="XM_818071.1"/>
</dbReference>
<dbReference type="SMR" id="Q38A34"/>
<dbReference type="STRING" id="185431.Q38A34"/>
<dbReference type="PaxDb" id="5691-EAN78336"/>
<dbReference type="GeneID" id="3662208"/>
<dbReference type="KEGG" id="tbr:Tb10.6k15.0990"/>
<dbReference type="VEuPathDB" id="TriTrypDB:Tb927.10.9410"/>
<dbReference type="eggNOG" id="KOG3939">
    <property type="taxonomic scope" value="Eukaryota"/>
</dbReference>
<dbReference type="InParanoid" id="Q38A34"/>
<dbReference type="OMA" id="LARDWMC"/>
<dbReference type="OrthoDB" id="409395at2759"/>
<dbReference type="BRENDA" id="2.7.9.3">
    <property type="organism ID" value="6519"/>
</dbReference>
<dbReference type="Proteomes" id="UP000008524">
    <property type="component" value="Chromosome 10"/>
</dbReference>
<dbReference type="GO" id="GO:0005737">
    <property type="term" value="C:cytoplasm"/>
    <property type="evidence" value="ECO:0000318"/>
    <property type="project" value="GO_Central"/>
</dbReference>
<dbReference type="GO" id="GO:0005654">
    <property type="term" value="C:nucleoplasm"/>
    <property type="evidence" value="ECO:0000314"/>
    <property type="project" value="GeneDB"/>
</dbReference>
<dbReference type="GO" id="GO:0005524">
    <property type="term" value="F:ATP binding"/>
    <property type="evidence" value="ECO:0007669"/>
    <property type="project" value="UniProtKB-KW"/>
</dbReference>
<dbReference type="GO" id="GO:0046872">
    <property type="term" value="F:metal ion binding"/>
    <property type="evidence" value="ECO:0007669"/>
    <property type="project" value="UniProtKB-KW"/>
</dbReference>
<dbReference type="GO" id="GO:0004756">
    <property type="term" value="F:selenide, water dikinase activity"/>
    <property type="evidence" value="ECO:0000314"/>
    <property type="project" value="GeneDB"/>
</dbReference>
<dbReference type="GO" id="GO:0072721">
    <property type="term" value="P:cellular response to dithiothreitol"/>
    <property type="evidence" value="ECO:0000315"/>
    <property type="project" value="GeneDB"/>
</dbReference>
<dbReference type="GO" id="GO:0016260">
    <property type="term" value="P:selenocysteine biosynthetic process"/>
    <property type="evidence" value="ECO:0000314"/>
    <property type="project" value="GeneDB"/>
</dbReference>
<dbReference type="CDD" id="cd02195">
    <property type="entry name" value="SelD"/>
    <property type="match status" value="1"/>
</dbReference>
<dbReference type="FunFam" id="3.30.1330.10:FF:000023">
    <property type="entry name" value="Putative selenophosphate synthetase"/>
    <property type="match status" value="1"/>
</dbReference>
<dbReference type="FunFam" id="3.90.650.10:FF:000010">
    <property type="entry name" value="Selenide, water dikinase"/>
    <property type="match status" value="1"/>
</dbReference>
<dbReference type="Gene3D" id="3.90.650.10">
    <property type="entry name" value="PurM-like C-terminal domain"/>
    <property type="match status" value="1"/>
</dbReference>
<dbReference type="Gene3D" id="3.30.1330.10">
    <property type="entry name" value="PurM-like, N-terminal domain"/>
    <property type="match status" value="1"/>
</dbReference>
<dbReference type="InterPro" id="IPR010918">
    <property type="entry name" value="PurM-like_C_dom"/>
</dbReference>
<dbReference type="InterPro" id="IPR036676">
    <property type="entry name" value="PurM-like_C_sf"/>
</dbReference>
<dbReference type="InterPro" id="IPR016188">
    <property type="entry name" value="PurM-like_N"/>
</dbReference>
<dbReference type="InterPro" id="IPR036921">
    <property type="entry name" value="PurM-like_N_sf"/>
</dbReference>
<dbReference type="InterPro" id="IPR004536">
    <property type="entry name" value="SPS/SelD"/>
</dbReference>
<dbReference type="NCBIfam" id="TIGR00476">
    <property type="entry name" value="selD"/>
    <property type="match status" value="1"/>
</dbReference>
<dbReference type="PANTHER" id="PTHR10256:SF0">
    <property type="entry name" value="INACTIVE SELENIDE, WATER DIKINASE-LIKE PROTEIN-RELATED"/>
    <property type="match status" value="1"/>
</dbReference>
<dbReference type="PANTHER" id="PTHR10256">
    <property type="entry name" value="SELENIDE, WATER DIKINASE"/>
    <property type="match status" value="1"/>
</dbReference>
<dbReference type="Pfam" id="PF00586">
    <property type="entry name" value="AIRS"/>
    <property type="match status" value="1"/>
</dbReference>
<dbReference type="Pfam" id="PF02769">
    <property type="entry name" value="AIRS_C"/>
    <property type="match status" value="1"/>
</dbReference>
<dbReference type="PIRSF" id="PIRSF036407">
    <property type="entry name" value="Selenphspht_syn"/>
    <property type="match status" value="1"/>
</dbReference>
<dbReference type="SUPFAM" id="SSF56042">
    <property type="entry name" value="PurM C-terminal domain-like"/>
    <property type="match status" value="1"/>
</dbReference>
<dbReference type="SUPFAM" id="SSF55326">
    <property type="entry name" value="PurM N-terminal domain-like"/>
    <property type="match status" value="1"/>
</dbReference>
<name>SPS2_TRYB2</name>
<evidence type="ECO:0000250" key="1">
    <source>
        <dbReference type="UniProtKB" id="P16456"/>
    </source>
</evidence>
<evidence type="ECO:0000250" key="2">
    <source>
        <dbReference type="UniProtKB" id="P49903"/>
    </source>
</evidence>
<evidence type="ECO:0000256" key="3">
    <source>
        <dbReference type="SAM" id="MobiDB-lite"/>
    </source>
</evidence>
<evidence type="ECO:0000269" key="4">
    <source>
    </source>
</evidence>
<evidence type="ECO:0000269" key="5">
    <source>
    </source>
</evidence>
<evidence type="ECO:0000303" key="6">
    <source>
    </source>
</evidence>
<evidence type="ECO:0000303" key="7">
    <source>
    </source>
</evidence>
<evidence type="ECO:0000305" key="8"/>
<evidence type="ECO:0000305" key="9">
    <source>
    </source>
</evidence>
<evidence type="ECO:0000312" key="10">
    <source>
        <dbReference type="EMBL" id="EAN78336.1"/>
    </source>
</evidence>
<evidence type="ECO:0000312" key="11">
    <source>
        <dbReference type="Proteomes" id="UP000008524"/>
    </source>
</evidence>
<protein>
    <recommendedName>
        <fullName evidence="8">Selenide, water dikinase</fullName>
        <ecNumber evidence="4">2.7.9.3</ecNumber>
    </recommendedName>
    <alternativeName>
        <fullName evidence="7">Selenophosphate synthetase 2</fullName>
    </alternativeName>
    <alternativeName>
        <fullName evidence="7">TbSPS2</fullName>
    </alternativeName>
    <alternativeName>
        <fullName evidence="6">TbselD</fullName>
    </alternativeName>
</protein>
<organism evidence="11">
    <name type="scientific">Trypanosoma brucei brucei (strain 927/4 GUTat10.1)</name>
    <dbReference type="NCBI Taxonomy" id="185431"/>
    <lineage>
        <taxon>Eukaryota</taxon>
        <taxon>Discoba</taxon>
        <taxon>Euglenozoa</taxon>
        <taxon>Kinetoplastea</taxon>
        <taxon>Metakinetoplastina</taxon>
        <taxon>Trypanosomatida</taxon>
        <taxon>Trypanosomatidae</taxon>
        <taxon>Trypanosoma</taxon>
    </lineage>
</organism>
<feature type="chain" id="PRO_0000451405" description="Selenide, water dikinase">
    <location>
        <begin position="1"/>
        <end position="393"/>
    </location>
</feature>
<feature type="region of interest" description="Disordered" evidence="3">
    <location>
        <begin position="1"/>
        <end position="21"/>
    </location>
</feature>
<feature type="active site" evidence="9">
    <location>
        <position position="42"/>
    </location>
</feature>
<feature type="binding site" description="in other chain" evidence="2">
    <location>
        <position position="45"/>
    </location>
    <ligand>
        <name>ATP</name>
        <dbReference type="ChEBI" id="CHEBI:30616"/>
        <note>ligand shared between dimeric partners</note>
    </ligand>
</feature>
<feature type="binding site" description="in other chain" evidence="2">
    <location>
        <begin position="68"/>
        <end position="70"/>
    </location>
    <ligand>
        <name>ATP</name>
        <dbReference type="ChEBI" id="CHEBI:30616"/>
        <note>ligand shared between dimeric partners</note>
    </ligand>
</feature>
<feature type="binding site" evidence="2">
    <location>
        <position position="70"/>
    </location>
    <ligand>
        <name>Mg(2+)</name>
        <dbReference type="ChEBI" id="CHEBI:18420"/>
    </ligand>
</feature>
<feature type="binding site" description="in other chain" evidence="2">
    <location>
        <position position="93"/>
    </location>
    <ligand>
        <name>ATP</name>
        <dbReference type="ChEBI" id="CHEBI:30616"/>
        <note>ligand shared between dimeric partners</note>
    </ligand>
</feature>
<feature type="binding site" description="in other chain" evidence="2">
    <location>
        <position position="116"/>
    </location>
    <ligand>
        <name>ATP</name>
        <dbReference type="ChEBI" id="CHEBI:30616"/>
        <note>ligand shared between dimeric partners</note>
    </ligand>
</feature>
<feature type="binding site" evidence="2">
    <location>
        <position position="116"/>
    </location>
    <ligand>
        <name>Mg(2+)</name>
        <dbReference type="ChEBI" id="CHEBI:18420"/>
    </ligand>
</feature>
<feature type="binding site" evidence="2">
    <location>
        <begin position="167"/>
        <end position="170"/>
    </location>
    <ligand>
        <name>ATP</name>
        <dbReference type="ChEBI" id="CHEBI:30616"/>
        <note>ligand shared between dimeric partners</note>
    </ligand>
</feature>
<feature type="binding site" evidence="2">
    <location>
        <position position="273"/>
    </location>
    <ligand>
        <name>Mg(2+)</name>
        <dbReference type="ChEBI" id="CHEBI:18420"/>
    </ligand>
</feature>
<feature type="site" description="Important for catalytic activity" evidence="1">
    <location>
        <position position="45"/>
    </location>
</feature>
<feature type="mutagenesis site" description="Loss of catalytic activity." evidence="4">
    <original>C</original>
    <variation>A</variation>
    <location>
        <position position="42"/>
    </location>
</feature>
<comment type="function">
    <text evidence="4">Synthesizes selenophosphate from selenide and ATP.</text>
</comment>
<comment type="catalytic activity">
    <reaction evidence="4">
        <text>hydrogenselenide + ATP + H2O = selenophosphate + AMP + phosphate + 2 H(+)</text>
        <dbReference type="Rhea" id="RHEA:18737"/>
        <dbReference type="ChEBI" id="CHEBI:15377"/>
        <dbReference type="ChEBI" id="CHEBI:15378"/>
        <dbReference type="ChEBI" id="CHEBI:16144"/>
        <dbReference type="ChEBI" id="CHEBI:29317"/>
        <dbReference type="ChEBI" id="CHEBI:30616"/>
        <dbReference type="ChEBI" id="CHEBI:43474"/>
        <dbReference type="ChEBI" id="CHEBI:456215"/>
        <dbReference type="EC" id="2.7.9.3"/>
    </reaction>
</comment>
<comment type="cofactor">
    <cofactor evidence="2">
        <name>Mg(2+)</name>
        <dbReference type="ChEBI" id="CHEBI:18420"/>
    </cofactor>
    <text evidence="2">Binds 1 Mg(2+) ion per monomer.</text>
</comment>
<comment type="subunit">
    <text evidence="4">Homodimer.</text>
</comment>
<comment type="disruption phenotype">
    <text evidence="5">RNAi-mediated knock down in procyclic and blood stream forms (strain 29-13) impairs growth following prolonged exposure to oxidative stress.</text>
</comment>
<comment type="similarity">
    <text evidence="8">Belongs to the selenophosphate synthase 1 family. Class I subfamily.</text>
</comment>
<reference evidence="11" key="1">
    <citation type="journal article" date="2005" name="Science">
        <title>The genome of the African trypanosome Trypanosoma brucei.</title>
        <authorList>
            <person name="Berriman M."/>
            <person name="Ghedin E."/>
            <person name="Hertz-Fowler C."/>
            <person name="Blandin G."/>
            <person name="Renauld H."/>
            <person name="Bartholomeu D.C."/>
            <person name="Lennard N.J."/>
            <person name="Caler E."/>
            <person name="Hamlin N.E."/>
            <person name="Haas B."/>
            <person name="Bohme U."/>
            <person name="Hannick L."/>
            <person name="Aslett M.A."/>
            <person name="Shallom J."/>
            <person name="Marcello L."/>
            <person name="Hou L."/>
            <person name="Wickstead B."/>
            <person name="Alsmark U.C.M."/>
            <person name="Arrowsmith C."/>
            <person name="Atkin R.J."/>
            <person name="Barron A.J."/>
            <person name="Bringaud F."/>
            <person name="Brooks K."/>
            <person name="Carrington M."/>
            <person name="Cherevach I."/>
            <person name="Chillingworth T.J."/>
            <person name="Churcher C."/>
            <person name="Clark L.N."/>
            <person name="Corton C.H."/>
            <person name="Cronin A."/>
            <person name="Davies R.M."/>
            <person name="Doggett J."/>
            <person name="Djikeng A."/>
            <person name="Feldblyum T."/>
            <person name="Field M.C."/>
            <person name="Fraser A."/>
            <person name="Goodhead I."/>
            <person name="Hance Z."/>
            <person name="Harper D."/>
            <person name="Harris B.R."/>
            <person name="Hauser H."/>
            <person name="Hostetler J."/>
            <person name="Ivens A."/>
            <person name="Jagels K."/>
            <person name="Johnson D."/>
            <person name="Johnson J."/>
            <person name="Jones K."/>
            <person name="Kerhornou A.X."/>
            <person name="Koo H."/>
            <person name="Larke N."/>
            <person name="Landfear S."/>
            <person name="Larkin C."/>
            <person name="Leech V."/>
            <person name="Line A."/>
            <person name="Lord A."/>
            <person name="Macleod A."/>
            <person name="Mooney P.J."/>
            <person name="Moule S."/>
            <person name="Martin D.M."/>
            <person name="Morgan G.W."/>
            <person name="Mungall K."/>
            <person name="Norbertczak H."/>
            <person name="Ormond D."/>
            <person name="Pai G."/>
            <person name="Peacock C.S."/>
            <person name="Peterson J."/>
            <person name="Quail M.A."/>
            <person name="Rabbinowitsch E."/>
            <person name="Rajandream M.A."/>
            <person name="Reitter C."/>
            <person name="Salzberg S.L."/>
            <person name="Sanders M."/>
            <person name="Schobel S."/>
            <person name="Sharp S."/>
            <person name="Simmonds M."/>
            <person name="Simpson A.J."/>
            <person name="Tallon L."/>
            <person name="Turner C.M."/>
            <person name="Tait A."/>
            <person name="Tivey A.R."/>
            <person name="Van Aken S."/>
            <person name="Walker D."/>
            <person name="Wanless D."/>
            <person name="Wang S."/>
            <person name="White B."/>
            <person name="White O."/>
            <person name="Whitehead S."/>
            <person name="Woodward J."/>
            <person name="Wortman J."/>
            <person name="Adams M.D."/>
            <person name="Embley T.M."/>
            <person name="Gull K."/>
            <person name="Ullu E."/>
            <person name="Barry J.D."/>
            <person name="Fairlamb A.H."/>
            <person name="Opperdoes F."/>
            <person name="Barrell B.G."/>
            <person name="Donelson J.E."/>
            <person name="Hall N."/>
            <person name="Fraser C.M."/>
            <person name="Melville S.E."/>
            <person name="El-Sayed N.M.A."/>
        </authorList>
    </citation>
    <scope>NUCLEOTIDE SEQUENCE [LARGE SCALE GENOMIC DNA]</scope>
    <source>
        <strain evidence="11">927/4 GUTat10.1</strain>
    </source>
</reference>
<reference evidence="8" key="2">
    <citation type="journal article" date="2008" name="Mol. Biochem. Parasitol.">
        <title>Selenocysteine incorporation in Kinetoplastid: selenophosphate synthetase (SELD) from Leishmania major and Trypanosoma brucei.</title>
        <authorList>
            <person name="Sculaccio S.A."/>
            <person name="Rodrigues E.M."/>
            <person name="Cordeiro A.T."/>
            <person name="Magalhaes A."/>
            <person name="Braga A.L."/>
            <person name="Alberto E.E."/>
            <person name="Thiemann O.H."/>
        </authorList>
    </citation>
    <scope>FUNCTION</scope>
    <scope>CATALYTIC ACTIVITY</scope>
    <scope>SUBUNIT</scope>
    <scope>ACTIVE SITE</scope>
    <scope>MUTAGENESIS OF CYS-42</scope>
</reference>
<reference evidence="8" key="3">
    <citation type="journal article" date="2011" name="Mol. Biochem. Parasitol.">
        <title>Oxidative stress protection of Trypanosomes requires selenophosphate synthase.</title>
        <authorList>
            <person name="Costa F.C."/>
            <person name="Oliva M.A."/>
            <person name="de Jesus T.C."/>
            <person name="Schenkman S."/>
            <person name="Thiemann O.H."/>
        </authorList>
    </citation>
    <scope>DISRUPTION PHENOTYPE</scope>
</reference>
<proteinExistence type="evidence at protein level"/>
<gene>
    <name evidence="7" type="primary">SPS2</name>
    <name evidence="6" type="synonym">SelD</name>
    <name evidence="10" type="ORF">Tb10.6k15.0990</name>
</gene>
<accession>Q38A34</accession>